<dbReference type="SMR" id="C0HLT8"/>
<dbReference type="GO" id="GO:0004869">
    <property type="term" value="F:cysteine-type endopeptidase inhibitor activity"/>
    <property type="evidence" value="ECO:0000314"/>
    <property type="project" value="UniProtKB"/>
</dbReference>
<dbReference type="GO" id="GO:0045735">
    <property type="term" value="F:nutrient reservoir activity"/>
    <property type="evidence" value="ECO:0007669"/>
    <property type="project" value="InterPro"/>
</dbReference>
<dbReference type="GO" id="GO:0002213">
    <property type="term" value="P:defense response to insect"/>
    <property type="evidence" value="ECO:0000314"/>
    <property type="project" value="UniProtKB"/>
</dbReference>
<dbReference type="GO" id="GO:0010951">
    <property type="term" value="P:negative regulation of endopeptidase activity"/>
    <property type="evidence" value="ECO:0000314"/>
    <property type="project" value="UniProtKB"/>
</dbReference>
<dbReference type="Gene3D" id="1.10.110.10">
    <property type="entry name" value="Plant lipid-transfer and hydrophobic proteins"/>
    <property type="match status" value="1"/>
</dbReference>
<dbReference type="InterPro" id="IPR036312">
    <property type="entry name" value="Bifun_inhib/LTP/seed_sf"/>
</dbReference>
<dbReference type="InterPro" id="IPR016140">
    <property type="entry name" value="Bifunc_inhib/LTP/seed_store"/>
</dbReference>
<dbReference type="InterPro" id="IPR000617">
    <property type="entry name" value="Napin/2SS/CON"/>
</dbReference>
<dbReference type="PANTHER" id="PTHR35496">
    <property type="entry name" value="2S SEED STORAGE PROTEIN 1-RELATED"/>
    <property type="match status" value="1"/>
</dbReference>
<dbReference type="PANTHER" id="PTHR35496:SF4">
    <property type="entry name" value="2S SULFUR-RICH SEED STORAGE PROTEIN 2-LIKE"/>
    <property type="match status" value="1"/>
</dbReference>
<dbReference type="Pfam" id="PF00234">
    <property type="entry name" value="Tryp_alpha_amyl"/>
    <property type="match status" value="1"/>
</dbReference>
<dbReference type="SMART" id="SM00499">
    <property type="entry name" value="AAI"/>
    <property type="match status" value="1"/>
</dbReference>
<dbReference type="SUPFAM" id="SSF47699">
    <property type="entry name" value="Bifunctional inhibitor/lipid-transfer protein/seed storage 2S albumin"/>
    <property type="match status" value="1"/>
</dbReference>
<sequence>ERRCDPRRLSDCEDFVRGRSKGGRGEKECRLSERCCTELQKMPRECRCEAVEGMYKEAERKERGEGEQRQRLERARALPGLCSIEPSYCEIRPS</sequence>
<evidence type="ECO:0000250" key="1">
    <source>
        <dbReference type="UniProtKB" id="P04403"/>
    </source>
</evidence>
<evidence type="ECO:0000269" key="2">
    <source>
    </source>
</evidence>
<evidence type="ECO:0000303" key="3">
    <source>
    </source>
</evidence>
<evidence type="ECO:0000305" key="4"/>
<evidence type="ECO:0000305" key="5">
    <source>
    </source>
</evidence>
<accession>C0HLT8</accession>
<organism evidence="3">
    <name type="scientific">Araucaria angustifolia</name>
    <name type="common">Brazilian pine tree</name>
    <dbReference type="NCBI Taxonomy" id="56992"/>
    <lineage>
        <taxon>Eukaryota</taxon>
        <taxon>Viridiplantae</taxon>
        <taxon>Streptophyta</taxon>
        <taxon>Embryophyta</taxon>
        <taxon>Tracheophyta</taxon>
        <taxon>Spermatophyta</taxon>
        <taxon>Pinopsida</taxon>
        <taxon>Pinidae</taxon>
        <taxon>Conifers II</taxon>
        <taxon>Araucariales</taxon>
        <taxon>Araucariaceae</taxon>
        <taxon>Araucaria</taxon>
    </lineage>
</organism>
<feature type="chain" id="PRO_0000452814" description="2S albumin-like cysteine protease inhibitor">
    <location>
        <begin position="1"/>
        <end position="94"/>
    </location>
</feature>
<feature type="disulfide bond" description="Interchain (between small and large chains)" evidence="1">
    <location>
        <begin position="12"/>
        <end position="35"/>
    </location>
</feature>
<feature type="disulfide bond" evidence="1">
    <location>
        <begin position="36"/>
        <end position="82"/>
    </location>
</feature>
<feature type="disulfide bond" evidence="1">
    <location>
        <begin position="48"/>
        <end position="89"/>
    </location>
</feature>
<feature type="non-consecutive residues" evidence="3">
    <location>
        <begin position="23"/>
        <end position="24"/>
    </location>
</feature>
<feature type="non-consecutive residues" evidence="3">
    <location>
        <begin position="61"/>
        <end position="62"/>
    </location>
</feature>
<feature type="non-terminal residue" evidence="3">
    <location>
        <position position="1"/>
    </location>
</feature>
<feature type="non-terminal residue" evidence="3">
    <location>
        <position position="94"/>
    </location>
</feature>
<comment type="function">
    <text evidence="2">Cysteine protease inhibitor that likely functions in defense against insects by inhibiting cysteine proteases in the midgut of herbivore insects such as C.maculatus (PubMed:33266031). Selectively inhibits cathepsin L, as well as papain, ficin and bromelain with lower efficiency (PubMed:33266031). Shows antitumor activity, inhibiting the growth of prostate cancer cell lines PC3 and DU145, and the gastric cancer cell line Hs746T (PubMed:33266031). No activity against cathepsin B or serine proteases (trypsin, human plasma kallikrein and elastase) (PubMed:33266031).</text>
</comment>
<comment type="biophysicochemical properties">
    <phDependence>
        <text evidence="2">Optimum pH is around 6. Stable from pH 2 to 10.</text>
    </phDependence>
    <temperatureDependence>
        <text evidence="2">Thermostable. Active from 25 to 100 degrees Celsius. Retains 80% of its maximal activity after heating for 2 hours at 100 degrees and retains around 30% of its maximal activity after heating for 4 hours at 100 degrees.</text>
    </temperatureDependence>
</comment>
<comment type="tissue specificity">
    <text evidence="2">Expressed in seeds (at protein level).</text>
</comment>
<comment type="similarity">
    <text evidence="4">Belongs to the 2S seed storage albumins family.</text>
</comment>
<name>CI2S_ARAAG</name>
<proteinExistence type="evidence at protein level"/>
<keyword id="KW-0903">Direct protein sequencing</keyword>
<keyword id="KW-1015">Disulfide bond</keyword>
<keyword id="KW-0646">Protease inhibitor</keyword>
<reference key="1">
    <citation type="journal article" date="2020" name="Plants (Basel)">
        <title>Biotechnological Potential of Araucaria angustifolia Pine Nuts Extract and the Cysteine Protease Inhibitor AaCI-2S.</title>
        <authorList>
            <person name="Sallai R.C."/>
            <person name="Salu B.R."/>
            <person name="Silva-Lucca R.A."/>
            <person name="Alves F.L."/>
            <person name="Napoleao T.H."/>
            <person name="Paiva P.M.G."/>
            <person name="da Silva Ferreira R."/>
            <person name="Sampaio M.U."/>
            <person name="Vilela Oliva M.L."/>
        </authorList>
    </citation>
    <scope>PROTEIN SEQUENCE</scope>
    <scope>FUNCTION</scope>
    <scope>BIOPHYSICOCHEMICAL PROPERTIES</scope>
    <scope>TISSUE SPECIFICITY</scope>
    <source>
        <tissue evidence="3">Seed</tissue>
    </source>
</reference>
<protein>
    <recommendedName>
        <fullName evidence="5">2S albumin-like cysteine protease inhibitor</fullName>
        <shortName evidence="3">AaCI-2S</shortName>
    </recommendedName>
</protein>